<comment type="function">
    <text evidence="1">Modulates RecA activity.</text>
</comment>
<comment type="subcellular location">
    <subcellularLocation>
        <location evidence="1">Cytoplasm</location>
    </subcellularLocation>
</comment>
<comment type="similarity">
    <text evidence="1">Belongs to the RecX family.</text>
</comment>
<proteinExistence type="inferred from homology"/>
<feature type="chain" id="PRO_1000164010" description="Regulatory protein RecX">
    <location>
        <begin position="1"/>
        <end position="270"/>
    </location>
</feature>
<accession>C3PCX7</accession>
<gene>
    <name evidence="1" type="primary">recX</name>
    <name type="ordered locus">BAA_0577</name>
</gene>
<name>RECX_BACAA</name>
<dbReference type="EMBL" id="CP001598">
    <property type="protein sequence ID" value="ACQ46725.1"/>
    <property type="molecule type" value="Genomic_DNA"/>
</dbReference>
<dbReference type="RefSeq" id="WP_000268518.1">
    <property type="nucleotide sequence ID" value="NC_012659.1"/>
</dbReference>
<dbReference type="SMR" id="C3PCX7"/>
<dbReference type="GeneID" id="45020565"/>
<dbReference type="KEGG" id="bai:BAA_0577"/>
<dbReference type="HOGENOM" id="CLU_066607_4_0_9"/>
<dbReference type="GO" id="GO:0005737">
    <property type="term" value="C:cytoplasm"/>
    <property type="evidence" value="ECO:0007669"/>
    <property type="project" value="UniProtKB-SubCell"/>
</dbReference>
<dbReference type="GO" id="GO:0006282">
    <property type="term" value="P:regulation of DNA repair"/>
    <property type="evidence" value="ECO:0007669"/>
    <property type="project" value="UniProtKB-UniRule"/>
</dbReference>
<dbReference type="Gene3D" id="1.10.10.10">
    <property type="entry name" value="Winged helix-like DNA-binding domain superfamily/Winged helix DNA-binding domain"/>
    <property type="match status" value="4"/>
</dbReference>
<dbReference type="HAMAP" id="MF_01114">
    <property type="entry name" value="RecX"/>
    <property type="match status" value="1"/>
</dbReference>
<dbReference type="InterPro" id="IPR053926">
    <property type="entry name" value="RecX_HTH_1st"/>
</dbReference>
<dbReference type="InterPro" id="IPR053924">
    <property type="entry name" value="RecX_HTH_2nd"/>
</dbReference>
<dbReference type="InterPro" id="IPR053925">
    <property type="entry name" value="RecX_HTH_3rd"/>
</dbReference>
<dbReference type="InterPro" id="IPR003783">
    <property type="entry name" value="Regulatory_RecX"/>
</dbReference>
<dbReference type="InterPro" id="IPR036388">
    <property type="entry name" value="WH-like_DNA-bd_sf"/>
</dbReference>
<dbReference type="NCBIfam" id="NF010733">
    <property type="entry name" value="PRK14135.1"/>
    <property type="match status" value="1"/>
</dbReference>
<dbReference type="PANTHER" id="PTHR33602">
    <property type="entry name" value="REGULATORY PROTEIN RECX FAMILY PROTEIN"/>
    <property type="match status" value="1"/>
</dbReference>
<dbReference type="PANTHER" id="PTHR33602:SF1">
    <property type="entry name" value="REGULATORY PROTEIN RECX FAMILY PROTEIN"/>
    <property type="match status" value="1"/>
</dbReference>
<dbReference type="Pfam" id="PF21982">
    <property type="entry name" value="RecX_HTH1"/>
    <property type="match status" value="1"/>
</dbReference>
<dbReference type="Pfam" id="PF02631">
    <property type="entry name" value="RecX_HTH2"/>
    <property type="match status" value="1"/>
</dbReference>
<dbReference type="Pfam" id="PF21981">
    <property type="entry name" value="RecX_HTH3"/>
    <property type="match status" value="2"/>
</dbReference>
<keyword id="KW-0963">Cytoplasm</keyword>
<sequence length="270" mass="32139">MAVITKIEVQKRSKERFNIYIDKGQGEEYGFSVNEVILIKHGLQKGLEIDEIALGNILYNEEVQKAYLQAISYLSYQMRTKLEIEDFLRKKEVGQAIISEVVSKLLHDRYINDKEYAILYTRTQSNVNRKGPTVIKRELLNKGVQDLIIMHSLQEYTKEKQIENALILIEKKKKSYQKHSFLQMKLKLDEMLVRKGYSRDVIQICLEELKDEKDDEKQQEALHYHGNKYYEKYKKYDGWTFENKMKQALYRKGFSIDEIEIFLQMKREEG</sequence>
<protein>
    <recommendedName>
        <fullName evidence="1">Regulatory protein RecX</fullName>
    </recommendedName>
</protein>
<evidence type="ECO:0000255" key="1">
    <source>
        <dbReference type="HAMAP-Rule" id="MF_01114"/>
    </source>
</evidence>
<organism>
    <name type="scientific">Bacillus anthracis (strain A0248)</name>
    <dbReference type="NCBI Taxonomy" id="592021"/>
    <lineage>
        <taxon>Bacteria</taxon>
        <taxon>Bacillati</taxon>
        <taxon>Bacillota</taxon>
        <taxon>Bacilli</taxon>
        <taxon>Bacillales</taxon>
        <taxon>Bacillaceae</taxon>
        <taxon>Bacillus</taxon>
        <taxon>Bacillus cereus group</taxon>
    </lineage>
</organism>
<reference key="1">
    <citation type="submission" date="2009-04" db="EMBL/GenBank/DDBJ databases">
        <title>Genome sequence of Bacillus anthracis A0248.</title>
        <authorList>
            <person name="Dodson R.J."/>
            <person name="Munk A.C."/>
            <person name="Bruce D."/>
            <person name="Detter C."/>
            <person name="Tapia R."/>
            <person name="Sutton G."/>
            <person name="Sims D."/>
            <person name="Brettin T."/>
        </authorList>
    </citation>
    <scope>NUCLEOTIDE SEQUENCE [LARGE SCALE GENOMIC DNA]</scope>
    <source>
        <strain>A0248</strain>
    </source>
</reference>